<keyword id="KW-0068">Autocatalytic cleavage</keyword>
<keyword id="KW-0210">Decarboxylase</keyword>
<keyword id="KW-0456">Lyase</keyword>
<keyword id="KW-0620">Polyamine biosynthesis</keyword>
<keyword id="KW-0670">Pyruvate</keyword>
<keyword id="KW-0949">S-adenosyl-L-methionine</keyword>
<keyword id="KW-0704">Schiff base</keyword>
<keyword id="KW-0745">Spermidine biosynthesis</keyword>
<keyword id="KW-0865">Zymogen</keyword>
<evidence type="ECO:0000250" key="1"/>
<evidence type="ECO:0000255" key="2">
    <source>
        <dbReference type="HAMAP-Rule" id="MF_00464"/>
    </source>
</evidence>
<accession>Q631E1</accession>
<gene>
    <name evidence="2" type="primary">speH2</name>
    <name type="ordered locus">BCE33L4906</name>
</gene>
<proteinExistence type="inferred from homology"/>
<feature type="chain" id="PRO_0000030093" description="S-adenosylmethionine decarboxylase 2 beta chain" evidence="1">
    <location>
        <begin position="1"/>
        <end position="64"/>
    </location>
</feature>
<feature type="chain" id="PRO_0000030094" description="S-adenosylmethionine decarboxylase 2 alpha chain" evidence="1">
    <location>
        <begin position="65"/>
        <end position="123"/>
    </location>
</feature>
<feature type="active site" description="Schiff-base intermediate with substrate; via pyruvic acid" evidence="2">
    <location>
        <position position="65"/>
    </location>
</feature>
<feature type="active site" description="Proton acceptor; for processing activity" evidence="2">
    <location>
        <position position="70"/>
    </location>
</feature>
<feature type="active site" description="Proton donor; for catalytic activity" evidence="2">
    <location>
        <position position="85"/>
    </location>
</feature>
<feature type="site" description="Cleavage (non-hydrolytic); by autolysis" evidence="2">
    <location>
        <begin position="64"/>
        <end position="65"/>
    </location>
</feature>
<feature type="modified residue" description="Pyruvic acid (Ser); by autocatalysis" evidence="2">
    <location>
        <position position="65"/>
    </location>
</feature>
<sequence>MEYSTFGKHIIVDLWGVDFSLLDDMYFLEHHLVHAADLSGAHVLNVSTKEFDPHGVTVLVLLSESHLSIHTYPEKNFAAIDCYTCGTTVEPQIAIDYIVSILKPNEMHIKKLIRGIGEIVNTD</sequence>
<comment type="function">
    <text evidence="2">Catalyzes the decarboxylation of S-adenosylmethionine to S-adenosylmethioninamine (dcAdoMet), the propylamine donor required for the synthesis of the polyamines spermine and spermidine from the diamine putrescine.</text>
</comment>
<comment type="catalytic activity">
    <reaction evidence="2">
        <text>S-adenosyl-L-methionine + H(+) = S-adenosyl 3-(methylsulfanyl)propylamine + CO2</text>
        <dbReference type="Rhea" id="RHEA:15981"/>
        <dbReference type="ChEBI" id="CHEBI:15378"/>
        <dbReference type="ChEBI" id="CHEBI:16526"/>
        <dbReference type="ChEBI" id="CHEBI:57443"/>
        <dbReference type="ChEBI" id="CHEBI:59789"/>
        <dbReference type="EC" id="4.1.1.50"/>
    </reaction>
</comment>
<comment type="cofactor">
    <cofactor evidence="2">
        <name>pyruvate</name>
        <dbReference type="ChEBI" id="CHEBI:15361"/>
    </cofactor>
    <text evidence="2">Binds 1 pyruvoyl group covalently per subunit.</text>
</comment>
<comment type="pathway">
    <text evidence="2">Amine and polyamine biosynthesis; S-adenosylmethioninamine biosynthesis; S-adenosylmethioninamine from S-adenosyl-L-methionine: step 1/1.</text>
</comment>
<comment type="subunit">
    <text evidence="2">Heterotetramer of two alpha and two beta chains arranged as a dimer of alpha/beta heterodimers.</text>
</comment>
<comment type="PTM">
    <text evidence="2">Is synthesized initially as an inactive proenzyme. Formation of the active enzyme involves a self-maturation process in which the active site pyruvoyl group is generated from an internal serine residue via an autocatalytic post-translational modification. Two non-identical subunits are generated from the proenzyme in this reaction, and the pyruvate is formed at the N-terminus of the alpha chain, which is derived from the carboxyl end of the proenzyme. The post-translation cleavage follows an unusual pathway, termed non-hydrolytic serinolysis, in which the side chain hydroxyl group of the serine supplies its oxygen atom to form the C-terminus of the beta chain, while the remainder of the serine residue undergoes an oxidative deamination to produce ammonia and the pyruvoyl group blocking the N-terminus of the alpha chain.</text>
</comment>
<comment type="similarity">
    <text evidence="2">Belongs to the prokaryotic AdoMetDC family. Type 1 subfamily.</text>
</comment>
<organism>
    <name type="scientific">Bacillus cereus (strain ZK / E33L)</name>
    <dbReference type="NCBI Taxonomy" id="288681"/>
    <lineage>
        <taxon>Bacteria</taxon>
        <taxon>Bacillati</taxon>
        <taxon>Bacillota</taxon>
        <taxon>Bacilli</taxon>
        <taxon>Bacillales</taxon>
        <taxon>Bacillaceae</taxon>
        <taxon>Bacillus</taxon>
        <taxon>Bacillus cereus group</taxon>
    </lineage>
</organism>
<name>SPEH2_BACCZ</name>
<protein>
    <recommendedName>
        <fullName evidence="2">S-adenosylmethionine decarboxylase proenzyme 2</fullName>
        <shortName evidence="2">AdoMetDC 2</shortName>
        <shortName evidence="2">SAMDC 2</shortName>
        <ecNumber evidence="2">4.1.1.50</ecNumber>
    </recommendedName>
    <component>
        <recommendedName>
            <fullName>S-adenosylmethionine decarboxylase 2 beta chain</fullName>
        </recommendedName>
    </component>
    <component>
        <recommendedName>
            <fullName>S-adenosylmethionine decarboxylase 2 alpha chain</fullName>
        </recommendedName>
    </component>
</protein>
<dbReference type="EC" id="4.1.1.50" evidence="2"/>
<dbReference type="EMBL" id="CP000001">
    <property type="protein sequence ID" value="AAU15373.1"/>
    <property type="molecule type" value="Genomic_DNA"/>
</dbReference>
<dbReference type="SMR" id="Q631E1"/>
<dbReference type="KEGG" id="bcz:BCE33L4906"/>
<dbReference type="PATRIC" id="fig|288681.22.peg.446"/>
<dbReference type="UniPathway" id="UPA00331">
    <property type="reaction ID" value="UER00451"/>
</dbReference>
<dbReference type="Proteomes" id="UP000002612">
    <property type="component" value="Chromosome"/>
</dbReference>
<dbReference type="GO" id="GO:0005829">
    <property type="term" value="C:cytosol"/>
    <property type="evidence" value="ECO:0007669"/>
    <property type="project" value="TreeGrafter"/>
</dbReference>
<dbReference type="GO" id="GO:0004014">
    <property type="term" value="F:adenosylmethionine decarboxylase activity"/>
    <property type="evidence" value="ECO:0007669"/>
    <property type="project" value="UniProtKB-UniRule"/>
</dbReference>
<dbReference type="GO" id="GO:0008295">
    <property type="term" value="P:spermidine biosynthetic process"/>
    <property type="evidence" value="ECO:0007669"/>
    <property type="project" value="UniProtKB-UniRule"/>
</dbReference>
<dbReference type="FunFam" id="3.30.360.110:FF:000001">
    <property type="entry name" value="S-adenosylmethionine decarboxylase proenzyme"/>
    <property type="match status" value="1"/>
</dbReference>
<dbReference type="Gene3D" id="3.30.160.750">
    <property type="match status" value="1"/>
</dbReference>
<dbReference type="Gene3D" id="3.30.360.110">
    <property type="entry name" value="S-adenosylmethionine decarboxylase domain"/>
    <property type="match status" value="1"/>
</dbReference>
<dbReference type="HAMAP" id="MF_00464">
    <property type="entry name" value="AdoMetDC_1"/>
    <property type="match status" value="1"/>
</dbReference>
<dbReference type="InterPro" id="IPR042286">
    <property type="entry name" value="AdoMetDC_C"/>
</dbReference>
<dbReference type="InterPro" id="IPR003826">
    <property type="entry name" value="AdoMetDC_fam_prok"/>
</dbReference>
<dbReference type="InterPro" id="IPR042284">
    <property type="entry name" value="AdoMetDC_N"/>
</dbReference>
<dbReference type="InterPro" id="IPR016067">
    <property type="entry name" value="S-AdoMet_deCO2ase_core"/>
</dbReference>
<dbReference type="InterPro" id="IPR017716">
    <property type="entry name" value="S-AdoMet_deCOase_pro-enz"/>
</dbReference>
<dbReference type="NCBIfam" id="TIGR03330">
    <property type="entry name" value="SAM_DCase_Bsu"/>
    <property type="match status" value="1"/>
</dbReference>
<dbReference type="PANTHER" id="PTHR33866">
    <property type="entry name" value="S-ADENOSYLMETHIONINE DECARBOXYLASE PROENZYME"/>
    <property type="match status" value="1"/>
</dbReference>
<dbReference type="PANTHER" id="PTHR33866:SF2">
    <property type="entry name" value="S-ADENOSYLMETHIONINE DECARBOXYLASE PROENZYME"/>
    <property type="match status" value="1"/>
</dbReference>
<dbReference type="Pfam" id="PF02675">
    <property type="entry name" value="AdoMet_dc"/>
    <property type="match status" value="1"/>
</dbReference>
<dbReference type="SUPFAM" id="SSF56276">
    <property type="entry name" value="S-adenosylmethionine decarboxylase"/>
    <property type="match status" value="1"/>
</dbReference>
<reference key="1">
    <citation type="journal article" date="2006" name="J. Bacteriol.">
        <title>Pathogenomic sequence analysis of Bacillus cereus and Bacillus thuringiensis isolates closely related to Bacillus anthracis.</title>
        <authorList>
            <person name="Han C.S."/>
            <person name="Xie G."/>
            <person name="Challacombe J.F."/>
            <person name="Altherr M.R."/>
            <person name="Bhotika S.S."/>
            <person name="Bruce D."/>
            <person name="Campbell C.S."/>
            <person name="Campbell M.L."/>
            <person name="Chen J."/>
            <person name="Chertkov O."/>
            <person name="Cleland C."/>
            <person name="Dimitrijevic M."/>
            <person name="Doggett N.A."/>
            <person name="Fawcett J.J."/>
            <person name="Glavina T."/>
            <person name="Goodwin L.A."/>
            <person name="Hill K.K."/>
            <person name="Hitchcock P."/>
            <person name="Jackson P.J."/>
            <person name="Keim P."/>
            <person name="Kewalramani A.R."/>
            <person name="Longmire J."/>
            <person name="Lucas S."/>
            <person name="Malfatti S."/>
            <person name="McMurry K."/>
            <person name="Meincke L.J."/>
            <person name="Misra M."/>
            <person name="Moseman B.L."/>
            <person name="Mundt M."/>
            <person name="Munk A.C."/>
            <person name="Okinaka R.T."/>
            <person name="Parson-Quintana B."/>
            <person name="Reilly L.P."/>
            <person name="Richardson P."/>
            <person name="Robinson D.L."/>
            <person name="Rubin E."/>
            <person name="Saunders E."/>
            <person name="Tapia R."/>
            <person name="Tesmer J.G."/>
            <person name="Thayer N."/>
            <person name="Thompson L.S."/>
            <person name="Tice H."/>
            <person name="Ticknor L.O."/>
            <person name="Wills P.L."/>
            <person name="Brettin T.S."/>
            <person name="Gilna P."/>
        </authorList>
    </citation>
    <scope>NUCLEOTIDE SEQUENCE [LARGE SCALE GENOMIC DNA]</scope>
    <source>
        <strain>ZK / E33L</strain>
    </source>
</reference>